<keyword id="KW-0687">Ribonucleoprotein</keyword>
<keyword id="KW-0689">Ribosomal protein</keyword>
<keyword id="KW-0694">RNA-binding</keyword>
<keyword id="KW-0699">rRNA-binding</keyword>
<accession>Q04Q87</accession>
<reference key="1">
    <citation type="journal article" date="2006" name="Proc. Natl. Acad. Sci. U.S.A.">
        <title>Genome reduction in Leptospira borgpetersenii reflects limited transmission potential.</title>
        <authorList>
            <person name="Bulach D.M."/>
            <person name="Zuerner R.L."/>
            <person name="Wilson P."/>
            <person name="Seemann T."/>
            <person name="McGrath A."/>
            <person name="Cullen P.A."/>
            <person name="Davis J."/>
            <person name="Johnson M."/>
            <person name="Kuczek E."/>
            <person name="Alt D.P."/>
            <person name="Peterson-Burch B."/>
            <person name="Coppel R.L."/>
            <person name="Rood J.I."/>
            <person name="Davies J.K."/>
            <person name="Adler B."/>
        </authorList>
    </citation>
    <scope>NUCLEOTIDE SEQUENCE [LARGE SCALE GENOMIC DNA]</scope>
    <source>
        <strain>JB197</strain>
    </source>
</reference>
<dbReference type="EMBL" id="CP000350">
    <property type="protein sequence ID" value="ABJ76933.1"/>
    <property type="molecule type" value="Genomic_DNA"/>
</dbReference>
<dbReference type="RefSeq" id="WP_002723939.1">
    <property type="nucleotide sequence ID" value="NC_008510.1"/>
</dbReference>
<dbReference type="SMR" id="Q04Q87"/>
<dbReference type="GeneID" id="61173121"/>
<dbReference type="KEGG" id="lbj:LBJ_2495"/>
<dbReference type="HOGENOM" id="CLU_061463_3_2_12"/>
<dbReference type="Proteomes" id="UP000000656">
    <property type="component" value="Chromosome 1"/>
</dbReference>
<dbReference type="GO" id="GO:0005737">
    <property type="term" value="C:cytoplasm"/>
    <property type="evidence" value="ECO:0007669"/>
    <property type="project" value="UniProtKB-ARBA"/>
</dbReference>
<dbReference type="GO" id="GO:1990904">
    <property type="term" value="C:ribonucleoprotein complex"/>
    <property type="evidence" value="ECO:0007669"/>
    <property type="project" value="UniProtKB-KW"/>
</dbReference>
<dbReference type="GO" id="GO:0005840">
    <property type="term" value="C:ribosome"/>
    <property type="evidence" value="ECO:0007669"/>
    <property type="project" value="UniProtKB-KW"/>
</dbReference>
<dbReference type="GO" id="GO:0019843">
    <property type="term" value="F:rRNA binding"/>
    <property type="evidence" value="ECO:0007669"/>
    <property type="project" value="UniProtKB-UniRule"/>
</dbReference>
<dbReference type="GO" id="GO:0003735">
    <property type="term" value="F:structural constituent of ribosome"/>
    <property type="evidence" value="ECO:0007669"/>
    <property type="project" value="InterPro"/>
</dbReference>
<dbReference type="GO" id="GO:0006412">
    <property type="term" value="P:translation"/>
    <property type="evidence" value="ECO:0007669"/>
    <property type="project" value="UniProtKB-UniRule"/>
</dbReference>
<dbReference type="HAMAP" id="MF_01363">
    <property type="entry name" value="Ribosomal_bL21"/>
    <property type="match status" value="1"/>
</dbReference>
<dbReference type="InterPro" id="IPR028909">
    <property type="entry name" value="bL21-like"/>
</dbReference>
<dbReference type="InterPro" id="IPR036164">
    <property type="entry name" value="bL21-like_sf"/>
</dbReference>
<dbReference type="InterPro" id="IPR001787">
    <property type="entry name" value="Ribosomal_bL21"/>
</dbReference>
<dbReference type="NCBIfam" id="TIGR00061">
    <property type="entry name" value="L21"/>
    <property type="match status" value="1"/>
</dbReference>
<dbReference type="PANTHER" id="PTHR21349">
    <property type="entry name" value="50S RIBOSOMAL PROTEIN L21"/>
    <property type="match status" value="1"/>
</dbReference>
<dbReference type="PANTHER" id="PTHR21349:SF0">
    <property type="entry name" value="LARGE RIBOSOMAL SUBUNIT PROTEIN BL21M"/>
    <property type="match status" value="1"/>
</dbReference>
<dbReference type="Pfam" id="PF00829">
    <property type="entry name" value="Ribosomal_L21p"/>
    <property type="match status" value="1"/>
</dbReference>
<dbReference type="SUPFAM" id="SSF141091">
    <property type="entry name" value="L21p-like"/>
    <property type="match status" value="1"/>
</dbReference>
<organism>
    <name type="scientific">Leptospira borgpetersenii serovar Hardjo-bovis (strain JB197)</name>
    <dbReference type="NCBI Taxonomy" id="355277"/>
    <lineage>
        <taxon>Bacteria</taxon>
        <taxon>Pseudomonadati</taxon>
        <taxon>Spirochaetota</taxon>
        <taxon>Spirochaetia</taxon>
        <taxon>Leptospirales</taxon>
        <taxon>Leptospiraceae</taxon>
        <taxon>Leptospira</taxon>
    </lineage>
</organism>
<proteinExistence type="inferred from homology"/>
<evidence type="ECO:0000255" key="1">
    <source>
        <dbReference type="HAMAP-Rule" id="MF_01363"/>
    </source>
</evidence>
<evidence type="ECO:0000305" key="2"/>
<comment type="function">
    <text evidence="1">This protein binds to 23S rRNA in the presence of protein L20.</text>
</comment>
<comment type="subunit">
    <text evidence="1">Part of the 50S ribosomal subunit. Contacts protein L20.</text>
</comment>
<comment type="similarity">
    <text evidence="1">Belongs to the bacterial ribosomal protein bL21 family.</text>
</comment>
<protein>
    <recommendedName>
        <fullName evidence="1">Large ribosomal subunit protein bL21</fullName>
    </recommendedName>
    <alternativeName>
        <fullName evidence="2">50S ribosomal protein L21</fullName>
    </alternativeName>
</protein>
<feature type="chain" id="PRO_1000067850" description="Large ribosomal subunit protein bL21">
    <location>
        <begin position="1"/>
        <end position="104"/>
    </location>
</feature>
<sequence>MYAIISVGNRQYKVTQDQEFLTEKTGKNAGESFDAKVLLFAESSNKVHIGQPELKTARVSLKVLEDVKGDKIHAYVYKRRKNYQKAWGHRQKLQKVKVVSLSAV</sequence>
<name>RL21_LEPBJ</name>
<gene>
    <name evidence="1" type="primary">rplU</name>
    <name type="ordered locus">LBJ_2495</name>
</gene>